<keyword id="KW-0113">Calvin cycle</keyword>
<keyword id="KW-0119">Carbohydrate metabolism</keyword>
<keyword id="KW-0963">Cytoplasm</keyword>
<keyword id="KW-0378">Hydrolase</keyword>
<keyword id="KW-0460">Magnesium</keyword>
<keyword id="KW-0479">Metal-binding</keyword>
<accession>B3QB72</accession>
<name>F16PA_RHOPT</name>
<protein>
    <recommendedName>
        <fullName evidence="1">Fructose-1,6-bisphosphatase class 1</fullName>
        <shortName evidence="1">FBPase class 1</shortName>
        <ecNumber evidence="1">3.1.3.11</ecNumber>
    </recommendedName>
    <alternativeName>
        <fullName evidence="1">D-fructose-1,6-bisphosphate 1-phosphohydrolase class 1</fullName>
    </alternativeName>
</protein>
<dbReference type="EC" id="3.1.3.11" evidence="1"/>
<dbReference type="EMBL" id="CP001096">
    <property type="protein sequence ID" value="ACF03615.1"/>
    <property type="molecule type" value="Genomic_DNA"/>
</dbReference>
<dbReference type="RefSeq" id="WP_011160177.1">
    <property type="nucleotide sequence ID" value="NC_011004.1"/>
</dbReference>
<dbReference type="SMR" id="B3QB72"/>
<dbReference type="KEGG" id="rpt:Rpal_5126"/>
<dbReference type="HOGENOM" id="CLU_039977_0_0_5"/>
<dbReference type="OrthoDB" id="9806756at2"/>
<dbReference type="UniPathway" id="UPA00116"/>
<dbReference type="Proteomes" id="UP000001725">
    <property type="component" value="Chromosome"/>
</dbReference>
<dbReference type="GO" id="GO:0005829">
    <property type="term" value="C:cytosol"/>
    <property type="evidence" value="ECO:0007669"/>
    <property type="project" value="TreeGrafter"/>
</dbReference>
<dbReference type="GO" id="GO:0042132">
    <property type="term" value="F:fructose 1,6-bisphosphate 1-phosphatase activity"/>
    <property type="evidence" value="ECO:0007669"/>
    <property type="project" value="UniProtKB-UniRule"/>
</dbReference>
<dbReference type="GO" id="GO:0000287">
    <property type="term" value="F:magnesium ion binding"/>
    <property type="evidence" value="ECO:0007669"/>
    <property type="project" value="UniProtKB-UniRule"/>
</dbReference>
<dbReference type="GO" id="GO:0030388">
    <property type="term" value="P:fructose 1,6-bisphosphate metabolic process"/>
    <property type="evidence" value="ECO:0007669"/>
    <property type="project" value="TreeGrafter"/>
</dbReference>
<dbReference type="GO" id="GO:0006002">
    <property type="term" value="P:fructose 6-phosphate metabolic process"/>
    <property type="evidence" value="ECO:0007669"/>
    <property type="project" value="TreeGrafter"/>
</dbReference>
<dbReference type="GO" id="GO:0006000">
    <property type="term" value="P:fructose metabolic process"/>
    <property type="evidence" value="ECO:0007669"/>
    <property type="project" value="TreeGrafter"/>
</dbReference>
<dbReference type="GO" id="GO:0006094">
    <property type="term" value="P:gluconeogenesis"/>
    <property type="evidence" value="ECO:0007669"/>
    <property type="project" value="UniProtKB-UniRule"/>
</dbReference>
<dbReference type="GO" id="GO:0019253">
    <property type="term" value="P:reductive pentose-phosphate cycle"/>
    <property type="evidence" value="ECO:0007669"/>
    <property type="project" value="UniProtKB-UniRule"/>
</dbReference>
<dbReference type="GO" id="GO:0005986">
    <property type="term" value="P:sucrose biosynthetic process"/>
    <property type="evidence" value="ECO:0007669"/>
    <property type="project" value="TreeGrafter"/>
</dbReference>
<dbReference type="CDD" id="cd00354">
    <property type="entry name" value="FBPase"/>
    <property type="match status" value="1"/>
</dbReference>
<dbReference type="FunFam" id="3.40.190.80:FF:000011">
    <property type="entry name" value="Fructose-1,6-bisphosphatase class 1"/>
    <property type="match status" value="1"/>
</dbReference>
<dbReference type="Gene3D" id="3.40.190.80">
    <property type="match status" value="1"/>
</dbReference>
<dbReference type="Gene3D" id="3.30.540.10">
    <property type="entry name" value="Fructose-1,6-Bisphosphatase, subunit A, domain 1"/>
    <property type="match status" value="1"/>
</dbReference>
<dbReference type="HAMAP" id="MF_01855">
    <property type="entry name" value="FBPase_class1"/>
    <property type="match status" value="1"/>
</dbReference>
<dbReference type="InterPro" id="IPR044015">
    <property type="entry name" value="FBPase_C_dom"/>
</dbReference>
<dbReference type="InterPro" id="IPR000146">
    <property type="entry name" value="FBPase_class-1"/>
</dbReference>
<dbReference type="InterPro" id="IPR033391">
    <property type="entry name" value="FBPase_N"/>
</dbReference>
<dbReference type="InterPro" id="IPR028343">
    <property type="entry name" value="FBPtase"/>
</dbReference>
<dbReference type="InterPro" id="IPR020548">
    <property type="entry name" value="Fructose_bisphosphatase_AS"/>
</dbReference>
<dbReference type="NCBIfam" id="NF006779">
    <property type="entry name" value="PRK09293.1-3"/>
    <property type="match status" value="1"/>
</dbReference>
<dbReference type="NCBIfam" id="NF006780">
    <property type="entry name" value="PRK09293.1-4"/>
    <property type="match status" value="1"/>
</dbReference>
<dbReference type="PANTHER" id="PTHR11556">
    <property type="entry name" value="FRUCTOSE-1,6-BISPHOSPHATASE-RELATED"/>
    <property type="match status" value="1"/>
</dbReference>
<dbReference type="PANTHER" id="PTHR11556:SF35">
    <property type="entry name" value="SEDOHEPTULOSE-1,7-BISPHOSPHATASE, CHLOROPLASTIC"/>
    <property type="match status" value="1"/>
</dbReference>
<dbReference type="Pfam" id="PF00316">
    <property type="entry name" value="FBPase"/>
    <property type="match status" value="1"/>
</dbReference>
<dbReference type="Pfam" id="PF18913">
    <property type="entry name" value="FBPase_C"/>
    <property type="match status" value="1"/>
</dbReference>
<dbReference type="PIRSF" id="PIRSF500210">
    <property type="entry name" value="FBPtase"/>
    <property type="match status" value="1"/>
</dbReference>
<dbReference type="PIRSF" id="PIRSF000904">
    <property type="entry name" value="FBPtase_SBPase"/>
    <property type="match status" value="1"/>
</dbReference>
<dbReference type="PRINTS" id="PR00115">
    <property type="entry name" value="F16BPHPHTASE"/>
</dbReference>
<dbReference type="SUPFAM" id="SSF56655">
    <property type="entry name" value="Carbohydrate phosphatase"/>
    <property type="match status" value="1"/>
</dbReference>
<dbReference type="PROSITE" id="PS00124">
    <property type="entry name" value="FBPASE"/>
    <property type="match status" value="1"/>
</dbReference>
<sequence length="343" mass="36633">MDQGQTLSVLLDSYAVDPQKKAVAAAVGAIAAGSIEISELIGQGALAGITGAAHGGSNADGDVQKDLDVKAEQIIVKSLKDVPYAALASEESDTLLDGDPNAPISIAYDPLDGSSNIDTNMTVGTIFSIIPNQPGVKPFTAAGSCQIAAGFVVYGPQTSLVLTLGDGVNIFTLDRKAKVYRLIRERVKVPADTAEYAVNASNHRHWEQPIRDFVDECIAGADGPRAKDFNMRWIGSLVAEVYRILTRGGVFLYPGDNRPGYGNGRLRLLYETHPMSFVMEQAGGAASTGRERVLDLTAKTIHQRSPLIMGSIDKVKRIELLHTDPSAASRSAPLFARRGLFRV</sequence>
<comment type="catalytic activity">
    <reaction evidence="1">
        <text>beta-D-fructose 1,6-bisphosphate + H2O = beta-D-fructose 6-phosphate + phosphate</text>
        <dbReference type="Rhea" id="RHEA:11064"/>
        <dbReference type="ChEBI" id="CHEBI:15377"/>
        <dbReference type="ChEBI" id="CHEBI:32966"/>
        <dbReference type="ChEBI" id="CHEBI:43474"/>
        <dbReference type="ChEBI" id="CHEBI:57634"/>
        <dbReference type="EC" id="3.1.3.11"/>
    </reaction>
</comment>
<comment type="cofactor">
    <cofactor evidence="1">
        <name>Mg(2+)</name>
        <dbReference type="ChEBI" id="CHEBI:18420"/>
    </cofactor>
    <text evidence="1">Binds 2 magnesium ions per subunit.</text>
</comment>
<comment type="pathway">
    <text evidence="1">Carbohydrate biosynthesis; Calvin cycle.</text>
</comment>
<comment type="subunit">
    <text evidence="1">Homotetramer.</text>
</comment>
<comment type="subcellular location">
    <subcellularLocation>
        <location evidence="1">Cytoplasm</location>
    </subcellularLocation>
</comment>
<comment type="similarity">
    <text evidence="1">Belongs to the FBPase class 1 family.</text>
</comment>
<evidence type="ECO:0000255" key="1">
    <source>
        <dbReference type="HAMAP-Rule" id="MF_01855"/>
    </source>
</evidence>
<feature type="chain" id="PRO_0000364679" description="Fructose-1,6-bisphosphatase class 1">
    <location>
        <begin position="1"/>
        <end position="343"/>
    </location>
</feature>
<feature type="binding site" evidence="1">
    <location>
        <position position="90"/>
    </location>
    <ligand>
        <name>Mg(2+)</name>
        <dbReference type="ChEBI" id="CHEBI:18420"/>
        <label>1</label>
    </ligand>
</feature>
<feature type="binding site" evidence="1">
    <location>
        <position position="109"/>
    </location>
    <ligand>
        <name>Mg(2+)</name>
        <dbReference type="ChEBI" id="CHEBI:18420"/>
        <label>1</label>
    </ligand>
</feature>
<feature type="binding site" evidence="1">
    <location>
        <position position="109"/>
    </location>
    <ligand>
        <name>Mg(2+)</name>
        <dbReference type="ChEBI" id="CHEBI:18420"/>
        <label>2</label>
    </ligand>
</feature>
<feature type="binding site" evidence="1">
    <location>
        <position position="111"/>
    </location>
    <ligand>
        <name>Mg(2+)</name>
        <dbReference type="ChEBI" id="CHEBI:18420"/>
        <label>1</label>
    </ligand>
</feature>
<feature type="binding site" evidence="1">
    <location>
        <begin position="112"/>
        <end position="115"/>
    </location>
    <ligand>
        <name>substrate</name>
    </ligand>
</feature>
<feature type="binding site" evidence="1">
    <location>
        <position position="112"/>
    </location>
    <ligand>
        <name>Mg(2+)</name>
        <dbReference type="ChEBI" id="CHEBI:18420"/>
        <label>2</label>
    </ligand>
</feature>
<feature type="binding site" evidence="1">
    <location>
        <position position="199"/>
    </location>
    <ligand>
        <name>substrate</name>
    </ligand>
</feature>
<feature type="binding site" evidence="1">
    <location>
        <position position="271"/>
    </location>
    <ligand>
        <name>Mg(2+)</name>
        <dbReference type="ChEBI" id="CHEBI:18420"/>
        <label>2</label>
    </ligand>
</feature>
<reference key="1">
    <citation type="submission" date="2008-05" db="EMBL/GenBank/DDBJ databases">
        <title>Complete sequence of Rhodopseudomonas palustris TIE-1.</title>
        <authorList>
            <consortium name="US DOE Joint Genome Institute"/>
            <person name="Lucas S."/>
            <person name="Copeland A."/>
            <person name="Lapidus A."/>
            <person name="Glavina del Rio T."/>
            <person name="Dalin E."/>
            <person name="Tice H."/>
            <person name="Pitluck S."/>
            <person name="Chain P."/>
            <person name="Malfatti S."/>
            <person name="Shin M."/>
            <person name="Vergez L."/>
            <person name="Lang D."/>
            <person name="Schmutz J."/>
            <person name="Larimer F."/>
            <person name="Land M."/>
            <person name="Hauser L."/>
            <person name="Kyrpides N."/>
            <person name="Mikhailova N."/>
            <person name="Emerson D."/>
            <person name="Newman D.K."/>
            <person name="Roden E."/>
            <person name="Richardson P."/>
        </authorList>
    </citation>
    <scope>NUCLEOTIDE SEQUENCE [LARGE SCALE GENOMIC DNA]</scope>
    <source>
        <strain>TIE-1</strain>
    </source>
</reference>
<proteinExistence type="inferred from homology"/>
<organism>
    <name type="scientific">Rhodopseudomonas palustris (strain TIE-1)</name>
    <dbReference type="NCBI Taxonomy" id="395960"/>
    <lineage>
        <taxon>Bacteria</taxon>
        <taxon>Pseudomonadati</taxon>
        <taxon>Pseudomonadota</taxon>
        <taxon>Alphaproteobacteria</taxon>
        <taxon>Hyphomicrobiales</taxon>
        <taxon>Nitrobacteraceae</taxon>
        <taxon>Rhodopseudomonas</taxon>
    </lineage>
</organism>
<gene>
    <name evidence="1" type="primary">fbp</name>
    <name type="ordered locus">Rpal_5126</name>
</gene>